<evidence type="ECO:0000250" key="1">
    <source>
        <dbReference type="UniProtKB" id="P0AFP6"/>
    </source>
</evidence>
<evidence type="ECO:0000305" key="2"/>
<sequence length="247" mass="26892">MKNTELEQLINEKLNSAAISDYAPNGLQVEGKETVQKIVTGVTASQALLDEAVRLGADAVIVHHGYFWKGESPVIRGMKRNRLKTLLANDINLYGWHLPLDAHPELGNNAQLAALLGITVMGEIEPLVPWGELTMPVPGLELASWIEARLGRKPLWCGDTGPEVVQRVAWCTGGGQSFIDSAARFGVDAFITGEVSEQTIHSAREQGLHFYAAGHHATERGGIRALSEWLNENTDLDVTFIDIPNPA</sequence>
<comment type="function">
    <text evidence="1">Provides significant protection from radiation damage and may be involved in the degradation of radiation-damaged nucleotides.</text>
</comment>
<comment type="subunit">
    <text evidence="1">Toroid-shaped homohexamer. In the hexamer, 3 dimers assemble to form a ring-like structure surrounding a central hole.</text>
</comment>
<comment type="similarity">
    <text evidence="2">Belongs to the GTP cyclohydrolase I type 2/NIF3 family.</text>
</comment>
<keyword id="KW-0227">DNA damage</keyword>
<keyword id="KW-0234">DNA repair</keyword>
<keyword id="KW-0479">Metal-binding</keyword>
<keyword id="KW-1185">Reference proteome</keyword>
<proteinExistence type="inferred from homology"/>
<name>GCH1L_ECO57</name>
<protein>
    <recommendedName>
        <fullName>GTP cyclohydrolase 1 type 2 homolog</fullName>
    </recommendedName>
</protein>
<organism>
    <name type="scientific">Escherichia coli O157:H7</name>
    <dbReference type="NCBI Taxonomy" id="83334"/>
    <lineage>
        <taxon>Bacteria</taxon>
        <taxon>Pseudomonadati</taxon>
        <taxon>Pseudomonadota</taxon>
        <taxon>Gammaproteobacteria</taxon>
        <taxon>Enterobacterales</taxon>
        <taxon>Enterobacteriaceae</taxon>
        <taxon>Escherichia</taxon>
    </lineage>
</organism>
<accession>P0AFP8</accession>
<accession>P75743</accession>
<feature type="chain" id="PRO_0000147308" description="GTP cyclohydrolase 1 type 2 homolog">
    <location>
        <begin position="1"/>
        <end position="247"/>
    </location>
</feature>
<feature type="binding site" evidence="1">
    <location>
        <position position="63"/>
    </location>
    <ligand>
        <name>a divalent metal cation</name>
        <dbReference type="ChEBI" id="CHEBI:60240"/>
        <label>1</label>
    </ligand>
</feature>
<feature type="binding site" evidence="1">
    <location>
        <position position="64"/>
    </location>
    <ligand>
        <name>a divalent metal cation</name>
        <dbReference type="ChEBI" id="CHEBI:60240"/>
        <label>2</label>
    </ligand>
</feature>
<feature type="binding site" evidence="1">
    <location>
        <position position="101"/>
    </location>
    <ligand>
        <name>a divalent metal cation</name>
        <dbReference type="ChEBI" id="CHEBI:60240"/>
        <label>1</label>
    </ligand>
</feature>
<feature type="binding site" evidence="1">
    <location>
        <position position="215"/>
    </location>
    <ligand>
        <name>a divalent metal cation</name>
        <dbReference type="ChEBI" id="CHEBI:60240"/>
        <label>2</label>
    </ligand>
</feature>
<feature type="binding site" evidence="1">
    <location>
        <position position="219"/>
    </location>
    <ligand>
        <name>a divalent metal cation</name>
        <dbReference type="ChEBI" id="CHEBI:60240"/>
        <label>1</label>
    </ligand>
</feature>
<feature type="binding site" evidence="1">
    <location>
        <position position="219"/>
    </location>
    <ligand>
        <name>a divalent metal cation</name>
        <dbReference type="ChEBI" id="CHEBI:60240"/>
        <label>2</label>
    </ligand>
</feature>
<reference key="1">
    <citation type="journal article" date="2001" name="Nature">
        <title>Genome sequence of enterohaemorrhagic Escherichia coli O157:H7.</title>
        <authorList>
            <person name="Perna N.T."/>
            <person name="Plunkett G. III"/>
            <person name="Burland V."/>
            <person name="Mau B."/>
            <person name="Glasner J.D."/>
            <person name="Rose D.J."/>
            <person name="Mayhew G.F."/>
            <person name="Evans P.S."/>
            <person name="Gregor J."/>
            <person name="Kirkpatrick H.A."/>
            <person name="Posfai G."/>
            <person name="Hackett J."/>
            <person name="Klink S."/>
            <person name="Boutin A."/>
            <person name="Shao Y."/>
            <person name="Miller L."/>
            <person name="Grotbeck E.J."/>
            <person name="Davis N.W."/>
            <person name="Lim A."/>
            <person name="Dimalanta E.T."/>
            <person name="Potamousis K."/>
            <person name="Apodaca J."/>
            <person name="Anantharaman T.S."/>
            <person name="Lin J."/>
            <person name="Yen G."/>
            <person name="Schwartz D.C."/>
            <person name="Welch R.A."/>
            <person name="Blattner F.R."/>
        </authorList>
    </citation>
    <scope>NUCLEOTIDE SEQUENCE [LARGE SCALE GENOMIC DNA]</scope>
    <source>
        <strain>O157:H7 / EDL933 / ATCC 700927 / EHEC</strain>
    </source>
</reference>
<reference key="2">
    <citation type="journal article" date="2001" name="DNA Res.">
        <title>Complete genome sequence of enterohemorrhagic Escherichia coli O157:H7 and genomic comparison with a laboratory strain K-12.</title>
        <authorList>
            <person name="Hayashi T."/>
            <person name="Makino K."/>
            <person name="Ohnishi M."/>
            <person name="Kurokawa K."/>
            <person name="Ishii K."/>
            <person name="Yokoyama K."/>
            <person name="Han C.-G."/>
            <person name="Ohtsubo E."/>
            <person name="Nakayama K."/>
            <person name="Murata T."/>
            <person name="Tanaka M."/>
            <person name="Tobe T."/>
            <person name="Iida T."/>
            <person name="Takami H."/>
            <person name="Honda T."/>
            <person name="Sasakawa C."/>
            <person name="Ogasawara N."/>
            <person name="Yasunaga T."/>
            <person name="Kuhara S."/>
            <person name="Shiba T."/>
            <person name="Hattori M."/>
            <person name="Shinagawa H."/>
        </authorList>
    </citation>
    <scope>NUCLEOTIDE SEQUENCE [LARGE SCALE GENOMIC DNA]</scope>
    <source>
        <strain>O157:H7 / Sakai / RIMD 0509952 / EHEC</strain>
    </source>
</reference>
<gene>
    <name type="primary">ybgI</name>
    <name type="ordered locus">Z0861</name>
    <name type="ordered locus">ECs0735</name>
</gene>
<dbReference type="EMBL" id="AE005174">
    <property type="protein sequence ID" value="AAG55033.1"/>
    <property type="molecule type" value="Genomic_DNA"/>
</dbReference>
<dbReference type="EMBL" id="BA000007">
    <property type="protein sequence ID" value="BAB34158.1"/>
    <property type="molecule type" value="Genomic_DNA"/>
</dbReference>
<dbReference type="PIR" id="E85571">
    <property type="entry name" value="E85571"/>
</dbReference>
<dbReference type="PIR" id="G90720">
    <property type="entry name" value="G90720"/>
</dbReference>
<dbReference type="RefSeq" id="NP_308762.1">
    <property type="nucleotide sequence ID" value="NC_002695.1"/>
</dbReference>
<dbReference type="RefSeq" id="WP_000798871.1">
    <property type="nucleotide sequence ID" value="NZ_VOAI01000019.1"/>
</dbReference>
<dbReference type="SMR" id="P0AFP8"/>
<dbReference type="STRING" id="155864.Z0861"/>
<dbReference type="GeneID" id="75205542"/>
<dbReference type="GeneID" id="917104"/>
<dbReference type="KEGG" id="ece:Z0861"/>
<dbReference type="KEGG" id="ecs:ECs_0735"/>
<dbReference type="PATRIC" id="fig|386585.9.peg.851"/>
<dbReference type="eggNOG" id="COG0327">
    <property type="taxonomic scope" value="Bacteria"/>
</dbReference>
<dbReference type="HOGENOM" id="CLU_037423_3_0_6"/>
<dbReference type="OMA" id="RRVGWCT"/>
<dbReference type="Proteomes" id="UP000000558">
    <property type="component" value="Chromosome"/>
</dbReference>
<dbReference type="Proteomes" id="UP000002519">
    <property type="component" value="Chromosome"/>
</dbReference>
<dbReference type="GO" id="GO:0005737">
    <property type="term" value="C:cytoplasm"/>
    <property type="evidence" value="ECO:0007669"/>
    <property type="project" value="TreeGrafter"/>
</dbReference>
<dbReference type="GO" id="GO:0046872">
    <property type="term" value="F:metal ion binding"/>
    <property type="evidence" value="ECO:0007669"/>
    <property type="project" value="UniProtKB-KW"/>
</dbReference>
<dbReference type="GO" id="GO:0006281">
    <property type="term" value="P:DNA repair"/>
    <property type="evidence" value="ECO:0007669"/>
    <property type="project" value="UniProtKB-KW"/>
</dbReference>
<dbReference type="FunFam" id="3.40.1390.30:FF:000002">
    <property type="entry name" value="Nif3-like dinuclear metal center protein"/>
    <property type="match status" value="1"/>
</dbReference>
<dbReference type="FunFam" id="3.40.1390.30:FF:000003">
    <property type="entry name" value="Nif3-like dinuclear metal center protein"/>
    <property type="match status" value="1"/>
</dbReference>
<dbReference type="Gene3D" id="3.40.1390.30">
    <property type="entry name" value="NIF3 (NGG1p interacting factor 3)-like"/>
    <property type="match status" value="2"/>
</dbReference>
<dbReference type="InterPro" id="IPR002678">
    <property type="entry name" value="DUF34/NIF3"/>
</dbReference>
<dbReference type="InterPro" id="IPR036069">
    <property type="entry name" value="DUF34/NIF3_sf"/>
</dbReference>
<dbReference type="NCBIfam" id="NF008064">
    <property type="entry name" value="PRK10799.1"/>
    <property type="match status" value="1"/>
</dbReference>
<dbReference type="NCBIfam" id="TIGR00486">
    <property type="entry name" value="YbgI_SA1388"/>
    <property type="match status" value="1"/>
</dbReference>
<dbReference type="PANTHER" id="PTHR13799:SF14">
    <property type="entry name" value="GTP CYCLOHYDROLASE 1 TYPE 2 HOMOLOG"/>
    <property type="match status" value="1"/>
</dbReference>
<dbReference type="PANTHER" id="PTHR13799">
    <property type="entry name" value="NGG1 INTERACTING FACTOR 3"/>
    <property type="match status" value="1"/>
</dbReference>
<dbReference type="Pfam" id="PF01784">
    <property type="entry name" value="DUF34_NIF3"/>
    <property type="match status" value="1"/>
</dbReference>
<dbReference type="SUPFAM" id="SSF102705">
    <property type="entry name" value="NIF3 (NGG1p interacting factor 3)-like"/>
    <property type="match status" value="1"/>
</dbReference>